<reference key="1">
    <citation type="journal article" date="2008" name="J. Bacteriol.">
        <title>Complete genome sequence of Leuconostoc citreum KM20.</title>
        <authorList>
            <person name="Kim J.F."/>
            <person name="Jeong H."/>
            <person name="Lee J.-S."/>
            <person name="Choi S.-H."/>
            <person name="Ha M."/>
            <person name="Hur C.-G."/>
            <person name="Kim J.-S."/>
            <person name="Lee S."/>
            <person name="Park H.-S."/>
            <person name="Park Y.-H."/>
            <person name="Oh T.K."/>
        </authorList>
    </citation>
    <scope>NUCLEOTIDE SEQUENCE [LARGE SCALE GENOMIC DNA]</scope>
    <source>
        <strain>KM20</strain>
    </source>
</reference>
<gene>
    <name evidence="1" type="primary">argG</name>
    <name type="ordered locus">LCK_01169</name>
</gene>
<protein>
    <recommendedName>
        <fullName evidence="1">Argininosuccinate synthase</fullName>
        <ecNumber evidence="1">6.3.4.5</ecNumber>
    </recommendedName>
    <alternativeName>
        <fullName evidence="1">Citrulline--aspartate ligase</fullName>
    </alternativeName>
</protein>
<dbReference type="EC" id="6.3.4.5" evidence="1"/>
<dbReference type="EMBL" id="DQ489736">
    <property type="protein sequence ID" value="ACA82996.1"/>
    <property type="molecule type" value="Genomic_DNA"/>
</dbReference>
<dbReference type="RefSeq" id="WP_004903257.1">
    <property type="nucleotide sequence ID" value="NC_010471.1"/>
</dbReference>
<dbReference type="SMR" id="B1MZP4"/>
<dbReference type="STRING" id="349519.LCK_01169"/>
<dbReference type="KEGG" id="lci:LCK_01169"/>
<dbReference type="eggNOG" id="COG0137">
    <property type="taxonomic scope" value="Bacteria"/>
</dbReference>
<dbReference type="HOGENOM" id="CLU_032784_4_2_9"/>
<dbReference type="OrthoDB" id="9801641at2"/>
<dbReference type="UniPathway" id="UPA00068">
    <property type="reaction ID" value="UER00113"/>
</dbReference>
<dbReference type="Proteomes" id="UP000002166">
    <property type="component" value="Chromosome"/>
</dbReference>
<dbReference type="GO" id="GO:0005737">
    <property type="term" value="C:cytoplasm"/>
    <property type="evidence" value="ECO:0007669"/>
    <property type="project" value="UniProtKB-SubCell"/>
</dbReference>
<dbReference type="GO" id="GO:0004055">
    <property type="term" value="F:argininosuccinate synthase activity"/>
    <property type="evidence" value="ECO:0007669"/>
    <property type="project" value="UniProtKB-UniRule"/>
</dbReference>
<dbReference type="GO" id="GO:0005524">
    <property type="term" value="F:ATP binding"/>
    <property type="evidence" value="ECO:0007669"/>
    <property type="project" value="UniProtKB-UniRule"/>
</dbReference>
<dbReference type="GO" id="GO:0000053">
    <property type="term" value="P:argininosuccinate metabolic process"/>
    <property type="evidence" value="ECO:0007669"/>
    <property type="project" value="TreeGrafter"/>
</dbReference>
<dbReference type="GO" id="GO:0006526">
    <property type="term" value="P:L-arginine biosynthetic process"/>
    <property type="evidence" value="ECO:0007669"/>
    <property type="project" value="UniProtKB-UniRule"/>
</dbReference>
<dbReference type="GO" id="GO:0000050">
    <property type="term" value="P:urea cycle"/>
    <property type="evidence" value="ECO:0007669"/>
    <property type="project" value="TreeGrafter"/>
</dbReference>
<dbReference type="CDD" id="cd01999">
    <property type="entry name" value="ASS"/>
    <property type="match status" value="1"/>
</dbReference>
<dbReference type="FunFam" id="3.40.50.620:FF:000038">
    <property type="entry name" value="Argininosuccinate synthase"/>
    <property type="match status" value="1"/>
</dbReference>
<dbReference type="FunFam" id="3.90.1260.10:FF:000007">
    <property type="entry name" value="Argininosuccinate synthase"/>
    <property type="match status" value="1"/>
</dbReference>
<dbReference type="Gene3D" id="3.90.1260.10">
    <property type="entry name" value="Argininosuccinate synthetase, chain A, domain 2"/>
    <property type="match status" value="1"/>
</dbReference>
<dbReference type="Gene3D" id="3.40.50.620">
    <property type="entry name" value="HUPs"/>
    <property type="match status" value="1"/>
</dbReference>
<dbReference type="Gene3D" id="1.20.5.470">
    <property type="entry name" value="Single helix bin"/>
    <property type="match status" value="1"/>
</dbReference>
<dbReference type="HAMAP" id="MF_00005">
    <property type="entry name" value="Arg_succ_synth_type1"/>
    <property type="match status" value="1"/>
</dbReference>
<dbReference type="InterPro" id="IPR048268">
    <property type="entry name" value="Arginosuc_syn_C"/>
</dbReference>
<dbReference type="InterPro" id="IPR048267">
    <property type="entry name" value="Arginosuc_syn_N"/>
</dbReference>
<dbReference type="InterPro" id="IPR001518">
    <property type="entry name" value="Arginosuc_synth"/>
</dbReference>
<dbReference type="InterPro" id="IPR018223">
    <property type="entry name" value="Arginosuc_synth_CS"/>
</dbReference>
<dbReference type="InterPro" id="IPR023434">
    <property type="entry name" value="Arginosuc_synth_type_1_subfam"/>
</dbReference>
<dbReference type="InterPro" id="IPR024074">
    <property type="entry name" value="AS_cat/multimer_dom_body"/>
</dbReference>
<dbReference type="InterPro" id="IPR014729">
    <property type="entry name" value="Rossmann-like_a/b/a_fold"/>
</dbReference>
<dbReference type="NCBIfam" id="TIGR00032">
    <property type="entry name" value="argG"/>
    <property type="match status" value="1"/>
</dbReference>
<dbReference type="NCBIfam" id="NF001770">
    <property type="entry name" value="PRK00509.1"/>
    <property type="match status" value="1"/>
</dbReference>
<dbReference type="PANTHER" id="PTHR11587">
    <property type="entry name" value="ARGININOSUCCINATE SYNTHASE"/>
    <property type="match status" value="1"/>
</dbReference>
<dbReference type="PANTHER" id="PTHR11587:SF2">
    <property type="entry name" value="ARGININOSUCCINATE SYNTHASE"/>
    <property type="match status" value="1"/>
</dbReference>
<dbReference type="Pfam" id="PF20979">
    <property type="entry name" value="Arginosuc_syn_C"/>
    <property type="match status" value="1"/>
</dbReference>
<dbReference type="Pfam" id="PF00764">
    <property type="entry name" value="Arginosuc_synth"/>
    <property type="match status" value="1"/>
</dbReference>
<dbReference type="SUPFAM" id="SSF52402">
    <property type="entry name" value="Adenine nucleotide alpha hydrolases-like"/>
    <property type="match status" value="1"/>
</dbReference>
<dbReference type="SUPFAM" id="SSF69864">
    <property type="entry name" value="Argininosuccinate synthetase, C-terminal domain"/>
    <property type="match status" value="1"/>
</dbReference>
<dbReference type="PROSITE" id="PS00564">
    <property type="entry name" value="ARGININOSUCCIN_SYN_1"/>
    <property type="match status" value="1"/>
</dbReference>
<accession>B1MZP4</accession>
<keyword id="KW-0028">Amino-acid biosynthesis</keyword>
<keyword id="KW-0055">Arginine biosynthesis</keyword>
<keyword id="KW-0067">ATP-binding</keyword>
<keyword id="KW-0963">Cytoplasm</keyword>
<keyword id="KW-0436">Ligase</keyword>
<keyword id="KW-0547">Nucleotide-binding</keyword>
<keyword id="KW-1185">Reference proteome</keyword>
<comment type="catalytic activity">
    <reaction evidence="1">
        <text>L-citrulline + L-aspartate + ATP = 2-(N(omega)-L-arginino)succinate + AMP + diphosphate + H(+)</text>
        <dbReference type="Rhea" id="RHEA:10932"/>
        <dbReference type="ChEBI" id="CHEBI:15378"/>
        <dbReference type="ChEBI" id="CHEBI:29991"/>
        <dbReference type="ChEBI" id="CHEBI:30616"/>
        <dbReference type="ChEBI" id="CHEBI:33019"/>
        <dbReference type="ChEBI" id="CHEBI:57472"/>
        <dbReference type="ChEBI" id="CHEBI:57743"/>
        <dbReference type="ChEBI" id="CHEBI:456215"/>
        <dbReference type="EC" id="6.3.4.5"/>
    </reaction>
</comment>
<comment type="pathway">
    <text evidence="1">Amino-acid biosynthesis; L-arginine biosynthesis; L-arginine from L-ornithine and carbamoyl phosphate: step 2/3.</text>
</comment>
<comment type="subunit">
    <text evidence="1">Homotetramer.</text>
</comment>
<comment type="subcellular location">
    <subcellularLocation>
        <location evidence="1">Cytoplasm</location>
    </subcellularLocation>
</comment>
<comment type="similarity">
    <text evidence="1">Belongs to the argininosuccinate synthase family. Type 1 subfamily.</text>
</comment>
<proteinExistence type="inferred from homology"/>
<evidence type="ECO:0000255" key="1">
    <source>
        <dbReference type="HAMAP-Rule" id="MF_00005"/>
    </source>
</evidence>
<name>ASSY_LEUCK</name>
<feature type="chain" id="PRO_1000089043" description="Argininosuccinate synthase">
    <location>
        <begin position="1"/>
        <end position="410"/>
    </location>
</feature>
<feature type="binding site" evidence="1">
    <location>
        <begin position="8"/>
        <end position="16"/>
    </location>
    <ligand>
        <name>ATP</name>
        <dbReference type="ChEBI" id="CHEBI:30616"/>
    </ligand>
</feature>
<feature type="binding site" evidence="1">
    <location>
        <position position="86"/>
    </location>
    <ligand>
        <name>L-citrulline</name>
        <dbReference type="ChEBI" id="CHEBI:57743"/>
    </ligand>
</feature>
<feature type="binding site" evidence="1">
    <location>
        <position position="116"/>
    </location>
    <ligand>
        <name>ATP</name>
        <dbReference type="ChEBI" id="CHEBI:30616"/>
    </ligand>
</feature>
<feature type="binding site" evidence="1">
    <location>
        <position position="118"/>
    </location>
    <ligand>
        <name>L-aspartate</name>
        <dbReference type="ChEBI" id="CHEBI:29991"/>
    </ligand>
</feature>
<feature type="binding site" evidence="1">
    <location>
        <position position="122"/>
    </location>
    <ligand>
        <name>L-aspartate</name>
        <dbReference type="ChEBI" id="CHEBI:29991"/>
    </ligand>
</feature>
<feature type="binding site" evidence="1">
    <location>
        <position position="122"/>
    </location>
    <ligand>
        <name>L-citrulline</name>
        <dbReference type="ChEBI" id="CHEBI:57743"/>
    </ligand>
</feature>
<feature type="binding site" evidence="1">
    <location>
        <position position="123"/>
    </location>
    <ligand>
        <name>L-aspartate</name>
        <dbReference type="ChEBI" id="CHEBI:29991"/>
    </ligand>
</feature>
<feature type="binding site" evidence="1">
    <location>
        <position position="126"/>
    </location>
    <ligand>
        <name>L-citrulline</name>
        <dbReference type="ChEBI" id="CHEBI:57743"/>
    </ligand>
</feature>
<feature type="binding site" evidence="1">
    <location>
        <position position="174"/>
    </location>
    <ligand>
        <name>L-citrulline</name>
        <dbReference type="ChEBI" id="CHEBI:57743"/>
    </ligand>
</feature>
<feature type="binding site" evidence="1">
    <location>
        <position position="259"/>
    </location>
    <ligand>
        <name>L-citrulline</name>
        <dbReference type="ChEBI" id="CHEBI:57743"/>
    </ligand>
</feature>
<feature type="binding site" evidence="1">
    <location>
        <position position="271"/>
    </location>
    <ligand>
        <name>L-citrulline</name>
        <dbReference type="ChEBI" id="CHEBI:57743"/>
    </ligand>
</feature>
<sequence length="410" mass="45291">MTEKLVLAYSGGLDTSVAIPWLKEKGYDVIAVVLNVGQHGKDMVAIQEKALKVGASQSIVIDAQAEFADQYVAPVIKANMLYEGEYPMVSALSRPLIIKKLVDIAHENEAVAIAHGSTGHGNDQVRFEAAIHALDPDMKIEAPIRDFQWSREEEIEYAQQHDVPVPINLESPYSIDENLWGRANEAGILENPWHQAPEDAYALTTAIENTPDIPEFVDVTFTAGIPTALDGNEMPLADLIIKLNIMAGTHGIGRIDHIENRLVGIKSREIYEAPAAAVLMTAHKDLEDLTLERDVAHFKPMVEQQLANLVYEAKWVSPLFDSLMAFVDETQKNVNGVVKMKLFKGSAIAVARQSEHNSLYDEDLATYTSASSFDQAAAVGFIKLWTLSNTVYEQVNHVHSQKPSQLKLKN</sequence>
<organism>
    <name type="scientific">Leuconostoc citreum (strain KM20)</name>
    <dbReference type="NCBI Taxonomy" id="349519"/>
    <lineage>
        <taxon>Bacteria</taxon>
        <taxon>Bacillati</taxon>
        <taxon>Bacillota</taxon>
        <taxon>Bacilli</taxon>
        <taxon>Lactobacillales</taxon>
        <taxon>Lactobacillaceae</taxon>
        <taxon>Leuconostoc</taxon>
    </lineage>
</organism>